<evidence type="ECO:0000269" key="1">
    <source>
    </source>
</evidence>
<evidence type="ECO:0000269" key="2">
    <source>
    </source>
</evidence>
<evidence type="ECO:0000305" key="3"/>
<evidence type="ECO:0007829" key="4">
    <source>
        <dbReference type="PDB" id="1AL0"/>
    </source>
</evidence>
<evidence type="ECO:0007829" key="5">
    <source>
        <dbReference type="PDB" id="1CD3"/>
    </source>
</evidence>
<evidence type="ECO:0007829" key="6">
    <source>
        <dbReference type="PDB" id="2BPA"/>
    </source>
</evidence>
<organismHost>
    <name type="scientific">Escherichia coli C</name>
    <dbReference type="NCBI Taxonomy" id="498388"/>
</organismHost>
<protein>
    <recommendedName>
        <fullName>Major spike protein G</fullName>
    </recommendedName>
    <alternativeName>
        <fullName>G protein</fullName>
    </alternativeName>
    <alternativeName>
        <fullName>GPG</fullName>
    </alternativeName>
</protein>
<organism>
    <name type="scientific">Enterobacteria phage phiX174</name>
    <name type="common">Isolate Sanger</name>
    <name type="synonym">Bacteriophage phi-X174</name>
    <dbReference type="NCBI Taxonomy" id="1217068"/>
    <lineage>
        <taxon>Viruses</taxon>
        <taxon>Monodnaviria</taxon>
        <taxon>Sangervirae</taxon>
        <taxon>Phixviricota</taxon>
        <taxon>Malgrandaviricetes</taxon>
        <taxon>Petitvirales</taxon>
        <taxon>Microviridae</taxon>
        <taxon>Bullavirinae</taxon>
        <taxon>Sinsheimervirus</taxon>
        <taxon>Escherichia phage phiX174</taxon>
    </lineage>
</organism>
<keyword id="KW-0002">3D-structure</keyword>
<keyword id="KW-0167">Capsid protein</keyword>
<keyword id="KW-0903">Direct protein sequencing</keyword>
<keyword id="KW-1035">Host cytoplasm</keyword>
<keyword id="KW-0945">Host-virus interaction</keyword>
<keyword id="KW-1185">Reference proteome</keyword>
<keyword id="KW-1161">Viral attachment to host cell</keyword>
<keyword id="KW-1171">Viral genome ejection through host cell envelope</keyword>
<keyword id="KW-1162">Viral penetration into host cytoplasm</keyword>
<keyword id="KW-0946">Virion</keyword>
<keyword id="KW-1160">Virus entry into host cell</keyword>
<dbReference type="EMBL" id="J02482">
    <property type="protein sequence ID" value="AAA32579.1"/>
    <property type="molecule type" value="Genomic_DNA"/>
</dbReference>
<dbReference type="PIR" id="C93185">
    <property type="entry name" value="ZGBPF4"/>
</dbReference>
<dbReference type="PDB" id="1AL0">
    <property type="method" value="X-ray"/>
    <property type="resolution" value="3.50 A"/>
    <property type="chains" value="G=1-175"/>
</dbReference>
<dbReference type="PDB" id="1CD3">
    <property type="method" value="X-ray"/>
    <property type="resolution" value="3.50 A"/>
    <property type="chains" value="G=1-175"/>
</dbReference>
<dbReference type="PDB" id="2BPA">
    <property type="method" value="X-ray"/>
    <property type="resolution" value="3.00 A"/>
    <property type="chains" value="2=1-175"/>
</dbReference>
<dbReference type="PDBsum" id="1AL0"/>
<dbReference type="PDBsum" id="1CD3"/>
<dbReference type="PDBsum" id="2BPA"/>
<dbReference type="SMR" id="P03643"/>
<dbReference type="DIP" id="DIP-6199N"/>
<dbReference type="IntAct" id="P03643">
    <property type="interactions" value="1"/>
</dbReference>
<dbReference type="KEGG" id="vg:2546401"/>
<dbReference type="EvolutionaryTrace" id="P03643"/>
<dbReference type="Proteomes" id="UP000005893">
    <property type="component" value="Segment"/>
</dbReference>
<dbReference type="GO" id="GO:0030430">
    <property type="term" value="C:host cell cytoplasm"/>
    <property type="evidence" value="ECO:0007669"/>
    <property type="project" value="UniProtKB-SubCell"/>
</dbReference>
<dbReference type="GO" id="GO:0019028">
    <property type="term" value="C:viral capsid"/>
    <property type="evidence" value="ECO:0007669"/>
    <property type="project" value="UniProtKB-KW"/>
</dbReference>
<dbReference type="GO" id="GO:0046718">
    <property type="term" value="P:symbiont entry into host cell"/>
    <property type="evidence" value="ECO:0007669"/>
    <property type="project" value="UniProtKB-KW"/>
</dbReference>
<dbReference type="GO" id="GO:0044003">
    <property type="term" value="P:symbiont-mediated perturbation of host process"/>
    <property type="evidence" value="ECO:0007669"/>
    <property type="project" value="InterPro"/>
</dbReference>
<dbReference type="GO" id="GO:0019062">
    <property type="term" value="P:virion attachment to host cell"/>
    <property type="evidence" value="ECO:0007669"/>
    <property type="project" value="UniProtKB-KW"/>
</dbReference>
<dbReference type="Gene3D" id="2.60.120.20">
    <property type="match status" value="1"/>
</dbReference>
<dbReference type="InterPro" id="IPR016184">
    <property type="entry name" value="Capsid/spike_ssDNA_virus"/>
</dbReference>
<dbReference type="InterPro" id="IPR003515">
    <property type="entry name" value="Spike_G"/>
</dbReference>
<dbReference type="InterPro" id="IPR029053">
    <property type="entry name" value="Viral_coat"/>
</dbReference>
<dbReference type="Pfam" id="PF02306">
    <property type="entry name" value="Phage_G"/>
    <property type="match status" value="1"/>
</dbReference>
<dbReference type="PIRSF" id="PIRSF004159">
    <property type="entry name" value="Spike_G"/>
    <property type="match status" value="1"/>
</dbReference>
<dbReference type="SUPFAM" id="SSF88645">
    <property type="entry name" value="ssDNA viruses"/>
    <property type="match status" value="1"/>
</dbReference>
<feature type="chain" id="PRO_0000164895" description="Major spike protein G">
    <location>
        <begin position="1"/>
        <end position="175"/>
    </location>
</feature>
<feature type="strand" evidence="4">
    <location>
        <begin position="13"/>
        <end position="17"/>
    </location>
</feature>
<feature type="strand" evidence="6">
    <location>
        <begin position="26"/>
        <end position="28"/>
    </location>
</feature>
<feature type="strand" evidence="6">
    <location>
        <begin position="30"/>
        <end position="33"/>
    </location>
</feature>
<feature type="strand" evidence="6">
    <location>
        <begin position="36"/>
        <end position="49"/>
    </location>
</feature>
<feature type="strand" evidence="6">
    <location>
        <begin position="51"/>
        <end position="61"/>
    </location>
</feature>
<feature type="strand" evidence="6">
    <location>
        <begin position="69"/>
        <end position="83"/>
    </location>
</feature>
<feature type="strand" evidence="6">
    <location>
        <begin position="88"/>
        <end position="98"/>
    </location>
</feature>
<feature type="strand" evidence="6">
    <location>
        <begin position="108"/>
        <end position="110"/>
    </location>
</feature>
<feature type="strand" evidence="6">
    <location>
        <begin position="115"/>
        <end position="117"/>
    </location>
</feature>
<feature type="strand" evidence="6">
    <location>
        <begin position="120"/>
        <end position="130"/>
    </location>
</feature>
<feature type="strand" evidence="5">
    <location>
        <begin position="134"/>
        <end position="137"/>
    </location>
</feature>
<feature type="strand" evidence="6">
    <location>
        <begin position="139"/>
        <end position="150"/>
    </location>
</feature>
<feature type="strand" evidence="6">
    <location>
        <begin position="152"/>
        <end position="163"/>
    </location>
</feature>
<accession>P03643</accession>
<sequence>MFQTFISRHNSNFFSDKLVLTSVTPASSAPVLQTPKATSSTLYFDSLTVNAGNGGFLHCIQMDTSVNAANQVVSVGADIAFDADPKFFACLVRFESSSVPTTLPTAYDVYPLNGRHDGGYYTVKDCVTIDVLPRTPGNNVYVGFMVWSNFTATKCRGLVSLNQVIKEIICLQPLK</sequence>
<name>G_BPPHS</name>
<comment type="function">
    <text evidence="1 2">Attaches the circulating virion to the bacterial lipopolysaccharides which serve as receptor for the virus. Determines the phage host-range. Probably triggers with protein H the injection of the phage DNA into the host cytoplasm upon conformational changes induced by the interaction with host lipopolysaccharides.</text>
</comment>
<comment type="subunit">
    <text>Pentamerizes and interacts with H protein, F and B pentamers to form 12S pre-assembly complex. Joining of twelve 12S complex form the procapsid.</text>
</comment>
<comment type="subcellular location">
    <subcellularLocation>
        <location>Virion</location>
    </subcellularLocation>
    <subcellularLocation>
        <location>Host cytoplasm</location>
    </subcellularLocation>
</comment>
<comment type="similarity">
    <text evidence="3">Belongs to the microvirus G protein family.</text>
</comment>
<reference key="1">
    <citation type="journal article" date="1977" name="Nature">
        <title>Nucleotide sequence of bacteriophage phi X174 DNA.</title>
        <authorList>
            <person name="Sanger F."/>
            <person name="Air G.M."/>
            <person name="Barrell B.G."/>
            <person name="Brown N.L."/>
            <person name="Coulson A.R."/>
            <person name="Fiddes J.C."/>
            <person name="Hutchison C.A. III"/>
            <person name="Slocombe P.M."/>
            <person name="Smith M."/>
        </authorList>
    </citation>
    <scope>NUCLEOTIDE SEQUENCE [GENOMIC DNA]</scope>
</reference>
<reference key="2">
    <citation type="journal article" date="1978" name="J. Mol. Biol.">
        <title>The nucleotide sequence of bacteriophage phiX174.</title>
        <authorList>
            <person name="Sanger F."/>
            <person name="Coulson A.R."/>
            <person name="Friedmann T."/>
            <person name="Air G.M."/>
            <person name="Barrell B.G."/>
            <person name="Brown N.L."/>
            <person name="Fiddes J.C."/>
            <person name="Hutchison C.A. III"/>
            <person name="Slocombe P.M."/>
            <person name="Smith M."/>
        </authorList>
    </citation>
    <scope>SEQUENCE REVISION</scope>
</reference>
<reference key="3">
    <citation type="journal article" date="1975" name="J. Mol. Biol.">
        <title>The nucleotide and amino acid sequences of the N (5') terminal region of gene G of bacteriophage phiphiX 174.</title>
        <authorList>
            <person name="Air G.M."/>
            <person name="Blackburn E.H."/>
            <person name="Sanger F."/>
            <person name="Coulson A.R."/>
        </authorList>
    </citation>
    <scope>PROTEIN SEQUENCE OF 1-67</scope>
    <scope>NUCLEOTIDE SEQUENCE [GENOMIC DNA]</scope>
</reference>
<reference key="4">
    <citation type="journal article" date="1976" name="J. Mol. Biol.">
        <title>Nucleotide and amino acid sequences of gene G of omegaX174.</title>
        <authorList>
            <person name="Air G.M."/>
            <person name="Sanger F."/>
            <person name="Coulson A.R."/>
        </authorList>
    </citation>
    <scope>PROTEIN SEQUENCE OF 63-175</scope>
    <scope>NUCLEOTIDE SEQUENCE [GENOMIC DNA]</scope>
</reference>
<reference key="5">
    <citation type="journal article" date="2000" name="J. Biochem.">
        <title>Characterization of the binding of spike H protein of bacteriophage phiX174 with receptor lipopolysaccharides.</title>
        <authorList>
            <person name="Inagaki M."/>
            <person name="Tanaka A."/>
            <person name="Suzuki R."/>
            <person name="Wakashima H."/>
            <person name="Kawaura T."/>
            <person name="Karita S."/>
            <person name="Nishikawa S."/>
            <person name="Kashimura N."/>
        </authorList>
    </citation>
    <scope>FUNCTION</scope>
</reference>
<reference key="6">
    <citation type="journal article" date="2003" name="FEMS Microbiol. Lett.">
        <title>Different contributions of the outer and inner R-core residues of lipopolysaccharide to the recognition by spike H and G proteins of bacteriophage phiX174.</title>
        <authorList>
            <person name="Inagaki M."/>
            <person name="Kawaura T."/>
            <person name="Wakashima H."/>
            <person name="Kato M."/>
            <person name="Nishikawa S."/>
            <person name="Kashimura N."/>
        </authorList>
    </citation>
    <scope>FUNCTION</scope>
</reference>
<reference key="7">
    <citation type="journal article" date="1992" name="Nature">
        <title>Atomic structure of single-stranded DNA bacteriophage phi X174 and its functional implications.</title>
        <authorList>
            <person name="McKenna R."/>
            <person name="Xia D."/>
            <person name="Williangmann P."/>
            <person name="Ilag L.L."/>
            <person name="Krishnaswamy S."/>
            <person name="Rossmann M.G."/>
            <person name="Olson N.H."/>
            <person name="Baker T.S."/>
            <person name="Incardona N.L."/>
        </authorList>
    </citation>
    <scope>CRYSTALLIZATION</scope>
</reference>
<reference key="8">
    <citation type="journal article" date="1994" name="J. Mol. Biol.">
        <title>Analysis of the single-stranded DNA bacteriophage phi X174, refined at a resolution of 3.0 A.</title>
        <authorList>
            <person name="McKenna R."/>
            <person name="Ilag L.L."/>
            <person name="Rossmann M.G."/>
        </authorList>
    </citation>
    <scope>X-RAY CRYSTALLOGRAPHY (3.0 ANGSTROMS)</scope>
</reference>
<reference key="9">
    <citation type="journal article" date="1997" name="Nature">
        <title>Structure of a viral procapsid with molecular scaffolding.</title>
        <authorList>
            <person name="Dokland T."/>
            <person name="McKenna R."/>
            <person name="Ilag L.L."/>
            <person name="Bowman B.R."/>
            <person name="Incardona N.L."/>
            <person name="Fane B.A."/>
            <person name="Rossmann M.G."/>
        </authorList>
    </citation>
    <scope>X-RAY CRYSTALLOGRAPHY (3.5 ANGSTROMS)</scope>
</reference>
<proteinExistence type="evidence at protein level"/>
<gene>
    <name type="primary">G</name>
</gene>